<keyword id="KW-0002">3D-structure</keyword>
<keyword id="KW-0238">DNA-binding</keyword>
<keyword id="KW-1017">Isopeptide bond</keyword>
<keyword id="KW-0479">Metal-binding</keyword>
<keyword id="KW-0539">Nucleus</keyword>
<keyword id="KW-1267">Proteomics identification</keyword>
<keyword id="KW-1185">Reference proteome</keyword>
<keyword id="KW-0677">Repeat</keyword>
<keyword id="KW-0832">Ubl conjugation</keyword>
<keyword id="KW-0862">Zinc</keyword>
<keyword id="KW-0863">Zinc-finger</keyword>
<accession>Q8WTR7</accession>
<accession>A8K8T7</accession>
<accession>Q9ULS9</accession>
<accession>Q9Y4Q7</accession>
<gene>
    <name type="primary">ZNF473</name>
    <name type="synonym">KIAA1141</name>
    <name type="synonym">ZFP100</name>
</gene>
<proteinExistence type="evidence at protein level"/>
<name>ZN473_HUMAN</name>
<evidence type="ECO:0000255" key="1">
    <source>
        <dbReference type="PROSITE-ProRule" id="PRU00042"/>
    </source>
</evidence>
<evidence type="ECO:0000255" key="2">
    <source>
        <dbReference type="PROSITE-ProRule" id="PRU00119"/>
    </source>
</evidence>
<evidence type="ECO:0000256" key="3">
    <source>
        <dbReference type="SAM" id="MobiDB-lite"/>
    </source>
</evidence>
<evidence type="ECO:0000269" key="4">
    <source>
    </source>
</evidence>
<evidence type="ECO:0000269" key="5">
    <source>
    </source>
</evidence>
<evidence type="ECO:0000269" key="6">
    <source>
    </source>
</evidence>
<evidence type="ECO:0000269" key="7">
    <source>
    </source>
</evidence>
<evidence type="ECO:0000269" key="8">
    <source>
    </source>
</evidence>
<evidence type="ECO:0000305" key="9"/>
<evidence type="ECO:0007744" key="10">
    <source>
    </source>
</evidence>
<evidence type="ECO:0007829" key="11">
    <source>
        <dbReference type="PDB" id="2EMB"/>
    </source>
</evidence>
<evidence type="ECO:0007829" key="12">
    <source>
        <dbReference type="PDB" id="2EMC"/>
    </source>
</evidence>
<evidence type="ECO:0007829" key="13">
    <source>
        <dbReference type="PDB" id="2EME"/>
    </source>
</evidence>
<evidence type="ECO:0007829" key="14">
    <source>
        <dbReference type="PDB" id="2EOU"/>
    </source>
</evidence>
<evidence type="ECO:0007829" key="15">
    <source>
        <dbReference type="PDB" id="2EOX"/>
    </source>
</evidence>
<evidence type="ECO:0007829" key="16">
    <source>
        <dbReference type="PDB" id="2EOY"/>
    </source>
</evidence>
<evidence type="ECO:0007829" key="17">
    <source>
        <dbReference type="PDB" id="2EOZ"/>
    </source>
</evidence>
<evidence type="ECO:0007829" key="18">
    <source>
        <dbReference type="PDB" id="2YRH"/>
    </source>
</evidence>
<evidence type="ECO:0007829" key="19">
    <source>
        <dbReference type="PDB" id="2YRJ"/>
    </source>
</evidence>
<evidence type="ECO:0007829" key="20">
    <source>
        <dbReference type="PDB" id="2YSV"/>
    </source>
</evidence>
<evidence type="ECO:0007829" key="21">
    <source>
        <dbReference type="PDB" id="2YTD"/>
    </source>
</evidence>
<evidence type="ECO:0007829" key="22">
    <source>
        <dbReference type="PDB" id="2YTE"/>
    </source>
</evidence>
<evidence type="ECO:0007829" key="23">
    <source>
        <dbReference type="PDB" id="2YTT"/>
    </source>
</evidence>
<evidence type="ECO:0007829" key="24">
    <source>
        <dbReference type="PDB" id="2YU5"/>
    </source>
</evidence>
<feature type="chain" id="PRO_0000047604" description="Zinc finger protein 473">
    <location>
        <begin position="1"/>
        <end position="871"/>
    </location>
</feature>
<feature type="domain" description="KRAB" evidence="2">
    <location>
        <begin position="6"/>
        <end position="75"/>
    </location>
</feature>
<feature type="zinc finger region" description="C2H2-type 1" evidence="1">
    <location>
        <begin position="209"/>
        <end position="231"/>
    </location>
</feature>
<feature type="zinc finger region" description="C2H2-type 2; degenerate" evidence="1">
    <location>
        <begin position="265"/>
        <end position="286"/>
    </location>
</feature>
<feature type="zinc finger region" description="C2H2-type 3" evidence="1">
    <location>
        <begin position="320"/>
        <end position="342"/>
    </location>
</feature>
<feature type="zinc finger region" description="C2H2-type 4" evidence="1">
    <location>
        <begin position="347"/>
        <end position="369"/>
    </location>
</feature>
<feature type="zinc finger region" description="C2H2-type 5" evidence="1">
    <location>
        <begin position="375"/>
        <end position="397"/>
    </location>
</feature>
<feature type="zinc finger region" description="C2H2-type 6; degenerate" evidence="1">
    <location>
        <begin position="403"/>
        <end position="425"/>
    </location>
</feature>
<feature type="zinc finger region" description="C2H2-type 7" evidence="1">
    <location>
        <begin position="431"/>
        <end position="453"/>
    </location>
</feature>
<feature type="zinc finger region" description="C2H2-type 8" evidence="1">
    <location>
        <begin position="459"/>
        <end position="481"/>
    </location>
</feature>
<feature type="zinc finger region" description="C2H2-type 9" evidence="1">
    <location>
        <begin position="487"/>
        <end position="509"/>
    </location>
</feature>
<feature type="zinc finger region" description="C2H2-type 10" evidence="1">
    <location>
        <begin position="515"/>
        <end position="537"/>
    </location>
</feature>
<feature type="zinc finger region" description="C2H2-type 11" evidence="1">
    <location>
        <begin position="562"/>
        <end position="584"/>
    </location>
</feature>
<feature type="zinc finger region" description="C2H2-type 12" evidence="1">
    <location>
        <begin position="591"/>
        <end position="613"/>
    </location>
</feature>
<feature type="zinc finger region" description="C2H2-type 13" evidence="1">
    <location>
        <begin position="646"/>
        <end position="668"/>
    </location>
</feature>
<feature type="zinc finger region" description="C2H2-type 14" evidence="1">
    <location>
        <begin position="674"/>
        <end position="696"/>
    </location>
</feature>
<feature type="zinc finger region" description="C2H2-type 15" evidence="1">
    <location>
        <begin position="702"/>
        <end position="724"/>
    </location>
</feature>
<feature type="zinc finger region" description="C2H2-type 16" evidence="1">
    <location>
        <begin position="730"/>
        <end position="752"/>
    </location>
</feature>
<feature type="zinc finger region" description="C2H2-type 17" evidence="1">
    <location>
        <begin position="758"/>
        <end position="780"/>
    </location>
</feature>
<feature type="zinc finger region" description="C2H2-type 18" evidence="1">
    <location>
        <begin position="786"/>
        <end position="808"/>
    </location>
</feature>
<feature type="zinc finger region" description="C2H2-type 19" evidence="1">
    <location>
        <begin position="814"/>
        <end position="836"/>
    </location>
</feature>
<feature type="zinc finger region" description="C2H2-type 20" evidence="1">
    <location>
        <begin position="842"/>
        <end position="864"/>
    </location>
</feature>
<feature type="region of interest" description="Disordered" evidence="3">
    <location>
        <begin position="47"/>
        <end position="81"/>
    </location>
</feature>
<feature type="region of interest" description="Disordered" evidence="3">
    <location>
        <begin position="140"/>
        <end position="164"/>
    </location>
</feature>
<feature type="region of interest" description="Disordered" evidence="3">
    <location>
        <begin position="290"/>
        <end position="318"/>
    </location>
</feature>
<feature type="region of interest" description="Interaction with SLBP/pre-mRNA complex">
    <location>
        <begin position="312"/>
        <end position="552"/>
    </location>
</feature>
<feature type="compositionally biased region" description="Polar residues" evidence="3">
    <location>
        <begin position="71"/>
        <end position="81"/>
    </location>
</feature>
<feature type="compositionally biased region" description="Basic and acidic residues" evidence="3">
    <location>
        <begin position="145"/>
        <end position="154"/>
    </location>
</feature>
<feature type="compositionally biased region" description="Basic and acidic residues" evidence="3">
    <location>
        <begin position="290"/>
        <end position="317"/>
    </location>
</feature>
<feature type="cross-link" description="Glycyl lysine isopeptide (Lys-Gly) (interchain with G-Cter in SUMO2)" evidence="10">
    <location>
        <position position="148"/>
    </location>
</feature>
<feature type="cross-link" description="Glycyl lysine isopeptide (Lys-Gly) (interchain with G-Cter in SUMO2)" evidence="10">
    <location>
        <position position="419"/>
    </location>
</feature>
<feature type="cross-link" description="Glycyl lysine isopeptide (Lys-Gly) (interchain with G-Cter in SUMO2)" evidence="10">
    <location>
        <position position="549"/>
    </location>
</feature>
<feature type="cross-link" description="Glycyl lysine isopeptide (Lys-Gly) (interchain with G-Cter in SUMO2)" evidence="10">
    <location>
        <position position="558"/>
    </location>
</feature>
<feature type="cross-link" description="Glycyl lysine isopeptide (Lys-Gly) (interchain with G-Cter in SUMO2)" evidence="10">
    <location>
        <position position="635"/>
    </location>
</feature>
<feature type="sequence variant" id="VAR_052839" description="In dbSNP:rs10419876.">
    <original>S</original>
    <variation>G</variation>
    <location>
        <position position="59"/>
    </location>
</feature>
<feature type="sequence variant" id="VAR_052840" description="In dbSNP:rs10419911.">
    <original>S</original>
    <variation>G</variation>
    <location>
        <position position="74"/>
    </location>
</feature>
<feature type="sequence variant" id="VAR_052841" description="In dbSNP:rs16981705.">
    <original>T</original>
    <variation>M</variation>
    <location>
        <position position="164"/>
    </location>
</feature>
<feature type="sequence variant" id="VAR_052842" description="In dbSNP:rs16981706.">
    <original>E</original>
    <variation>G</variation>
    <location>
        <position position="309"/>
    </location>
</feature>
<feature type="sequence variant" id="VAR_052843" description="In dbSNP:rs10424809.">
    <original>T</original>
    <variation>I</variation>
    <location>
        <position position="654"/>
    </location>
</feature>
<feature type="sequence variant" id="VAR_052844" description="In dbSNP:rs10426374.">
    <original>S</original>
    <variation>A</variation>
    <location>
        <position position="662"/>
    </location>
</feature>
<feature type="sequence conflict" description="In Ref. 6." evidence="9" ref="6">
    <original>P</original>
    <variation>A</variation>
    <location>
        <position position="486"/>
    </location>
</feature>
<feature type="sequence conflict" description="In Ref. 2; BAA86455." evidence="9" ref="2">
    <original>V</original>
    <variation>M</variation>
    <location>
        <position position="588"/>
    </location>
</feature>
<feature type="strand" evidence="23">
    <location>
        <begin position="212"/>
        <end position="214"/>
    </location>
</feature>
<feature type="helix" evidence="23">
    <location>
        <begin position="221"/>
        <end position="228"/>
    </location>
</feature>
<feature type="helix" evidence="23">
    <location>
        <begin position="230"/>
        <end position="233"/>
    </location>
</feature>
<feature type="strand" evidence="15">
    <location>
        <begin position="320"/>
        <end position="322"/>
    </location>
</feature>
<feature type="turn" evidence="15">
    <location>
        <begin position="323"/>
        <end position="326"/>
    </location>
</feature>
<feature type="strand" evidence="15">
    <location>
        <begin position="327"/>
        <end position="332"/>
    </location>
</feature>
<feature type="helix" evidence="15">
    <location>
        <begin position="333"/>
        <end position="336"/>
    </location>
</feature>
<feature type="helix" evidence="15">
    <location>
        <begin position="339"/>
        <end position="342"/>
    </location>
</feature>
<feature type="strand" evidence="11">
    <location>
        <begin position="345"/>
        <end position="348"/>
    </location>
</feature>
<feature type="turn" evidence="11">
    <location>
        <begin position="350"/>
        <end position="352"/>
    </location>
</feature>
<feature type="strand" evidence="11">
    <location>
        <begin position="355"/>
        <end position="357"/>
    </location>
</feature>
<feature type="helix" evidence="11">
    <location>
        <begin position="359"/>
        <end position="365"/>
    </location>
</feature>
<feature type="helix" evidence="11">
    <location>
        <begin position="366"/>
        <end position="369"/>
    </location>
</feature>
<feature type="strand" evidence="14">
    <location>
        <begin position="370"/>
        <end position="372"/>
    </location>
</feature>
<feature type="turn" evidence="14">
    <location>
        <begin position="378"/>
        <end position="380"/>
    </location>
</feature>
<feature type="helix" evidence="14">
    <location>
        <begin position="387"/>
        <end position="397"/>
    </location>
</feature>
<feature type="strand" evidence="21">
    <location>
        <begin position="430"/>
        <end position="432"/>
    </location>
</feature>
<feature type="strand" evidence="21">
    <location>
        <begin position="434"/>
        <end position="436"/>
    </location>
</feature>
<feature type="strand" evidence="21">
    <location>
        <begin position="439"/>
        <end position="442"/>
    </location>
</feature>
<feature type="helix" evidence="21">
    <location>
        <begin position="443"/>
        <end position="453"/>
    </location>
</feature>
<feature type="turn" evidence="22">
    <location>
        <begin position="490"/>
        <end position="492"/>
    </location>
</feature>
<feature type="helix" evidence="22">
    <location>
        <begin position="499"/>
        <end position="508"/>
    </location>
</feature>
<feature type="strand" evidence="16">
    <location>
        <begin position="565"/>
        <end position="567"/>
    </location>
</feature>
<feature type="strand" evidence="16">
    <location>
        <begin position="570"/>
        <end position="574"/>
    </location>
</feature>
<feature type="helix" evidence="16">
    <location>
        <begin position="575"/>
        <end position="581"/>
    </location>
</feature>
<feature type="strand" evidence="12">
    <location>
        <begin position="645"/>
        <end position="647"/>
    </location>
</feature>
<feature type="strand" evidence="12">
    <location>
        <begin position="649"/>
        <end position="651"/>
    </location>
</feature>
<feature type="strand" evidence="12">
    <location>
        <begin position="654"/>
        <end position="657"/>
    </location>
</feature>
<feature type="helix" evidence="12">
    <location>
        <begin position="658"/>
        <end position="665"/>
    </location>
</feature>
<feature type="turn" evidence="12">
    <location>
        <begin position="666"/>
        <end position="670"/>
    </location>
</feature>
<feature type="strand" evidence="24">
    <location>
        <begin position="673"/>
        <end position="675"/>
    </location>
</feature>
<feature type="strand" evidence="24">
    <location>
        <begin position="677"/>
        <end position="680"/>
    </location>
</feature>
<feature type="strand" evidence="24">
    <location>
        <begin position="682"/>
        <end position="686"/>
    </location>
</feature>
<feature type="helix" evidence="24">
    <location>
        <begin position="687"/>
        <end position="695"/>
    </location>
</feature>
<feature type="turn" evidence="18">
    <location>
        <begin position="705"/>
        <end position="707"/>
    </location>
</feature>
<feature type="strand" evidence="18">
    <location>
        <begin position="710"/>
        <end position="713"/>
    </location>
</feature>
<feature type="helix" evidence="18">
    <location>
        <begin position="714"/>
        <end position="721"/>
    </location>
</feature>
<feature type="turn" evidence="18">
    <location>
        <begin position="722"/>
        <end position="724"/>
    </location>
</feature>
<feature type="strand" evidence="13">
    <location>
        <begin position="729"/>
        <end position="731"/>
    </location>
</feature>
<feature type="strand" evidence="13">
    <location>
        <begin position="733"/>
        <end position="735"/>
    </location>
</feature>
<feature type="strand" evidence="13">
    <location>
        <begin position="738"/>
        <end position="741"/>
    </location>
</feature>
<feature type="helix" evidence="13">
    <location>
        <begin position="742"/>
        <end position="749"/>
    </location>
</feature>
<feature type="helix" evidence="13">
    <location>
        <begin position="750"/>
        <end position="752"/>
    </location>
</feature>
<feature type="strand" evidence="20">
    <location>
        <begin position="761"/>
        <end position="763"/>
    </location>
</feature>
<feature type="strand" evidence="20">
    <location>
        <begin position="768"/>
        <end position="771"/>
    </location>
</feature>
<feature type="helix" evidence="20">
    <location>
        <begin position="772"/>
        <end position="778"/>
    </location>
</feature>
<feature type="strand" evidence="19">
    <location>
        <begin position="789"/>
        <end position="791"/>
    </location>
</feature>
<feature type="strand" evidence="19">
    <location>
        <begin position="794"/>
        <end position="797"/>
    </location>
</feature>
<feature type="helix" evidence="19">
    <location>
        <begin position="798"/>
        <end position="805"/>
    </location>
</feature>
<feature type="turn" evidence="19">
    <location>
        <begin position="806"/>
        <end position="808"/>
    </location>
</feature>
<feature type="strand" evidence="17">
    <location>
        <begin position="813"/>
        <end position="816"/>
    </location>
</feature>
<feature type="turn" evidence="17">
    <location>
        <begin position="817"/>
        <end position="820"/>
    </location>
</feature>
<feature type="strand" evidence="17">
    <location>
        <begin position="821"/>
        <end position="825"/>
    </location>
</feature>
<feature type="helix" evidence="17">
    <location>
        <begin position="826"/>
        <end position="836"/>
    </location>
</feature>
<reference key="1">
    <citation type="journal article" date="2002" name="Genes Dev.">
        <title>A novel zinc finger protein is associated with U7 snRNP and interacts with the stem-loop binding protein in the histone pre-mRNP to stimulate 3'-end processing.</title>
        <authorList>
            <person name="Dominski Z."/>
            <person name="Erkmann J.A."/>
            <person name="Yang X."/>
            <person name="Sanchez R."/>
            <person name="Marzluff W.F."/>
        </authorList>
    </citation>
    <scope>NUCLEOTIDE SEQUENCE [MRNA]</scope>
    <scope>FUNCTION</scope>
    <scope>INTERACTION WITH SLBP/PRE-MRNA COMPLEX</scope>
</reference>
<reference key="2">
    <citation type="journal article" date="1999" name="DNA Res.">
        <title>Characterization of cDNA clones selected by the GeneMark analysis from size-fractionated cDNA libraries from human brain.</title>
        <authorList>
            <person name="Hirosawa M."/>
            <person name="Nagase T."/>
            <person name="Ishikawa K."/>
            <person name="Kikuno R."/>
            <person name="Nomura N."/>
            <person name="Ohara O."/>
        </authorList>
    </citation>
    <scope>NUCLEOTIDE SEQUENCE [LARGE SCALE MRNA]</scope>
    <source>
        <tissue>Brain</tissue>
    </source>
</reference>
<reference key="3">
    <citation type="journal article" date="2004" name="Nat. Genet.">
        <title>Complete sequencing and characterization of 21,243 full-length human cDNAs.</title>
        <authorList>
            <person name="Ota T."/>
            <person name="Suzuki Y."/>
            <person name="Nishikawa T."/>
            <person name="Otsuki T."/>
            <person name="Sugiyama T."/>
            <person name="Irie R."/>
            <person name="Wakamatsu A."/>
            <person name="Hayashi K."/>
            <person name="Sato H."/>
            <person name="Nagai K."/>
            <person name="Kimura K."/>
            <person name="Makita H."/>
            <person name="Sekine M."/>
            <person name="Obayashi M."/>
            <person name="Nishi T."/>
            <person name="Shibahara T."/>
            <person name="Tanaka T."/>
            <person name="Ishii S."/>
            <person name="Yamamoto J."/>
            <person name="Saito K."/>
            <person name="Kawai Y."/>
            <person name="Isono Y."/>
            <person name="Nakamura Y."/>
            <person name="Nagahari K."/>
            <person name="Murakami K."/>
            <person name="Yasuda T."/>
            <person name="Iwayanagi T."/>
            <person name="Wagatsuma M."/>
            <person name="Shiratori A."/>
            <person name="Sudo H."/>
            <person name="Hosoiri T."/>
            <person name="Kaku Y."/>
            <person name="Kodaira H."/>
            <person name="Kondo H."/>
            <person name="Sugawara M."/>
            <person name="Takahashi M."/>
            <person name="Kanda K."/>
            <person name="Yokoi T."/>
            <person name="Furuya T."/>
            <person name="Kikkawa E."/>
            <person name="Omura Y."/>
            <person name="Abe K."/>
            <person name="Kamihara K."/>
            <person name="Katsuta N."/>
            <person name="Sato K."/>
            <person name="Tanikawa M."/>
            <person name="Yamazaki M."/>
            <person name="Ninomiya K."/>
            <person name="Ishibashi T."/>
            <person name="Yamashita H."/>
            <person name="Murakawa K."/>
            <person name="Fujimori K."/>
            <person name="Tanai H."/>
            <person name="Kimata M."/>
            <person name="Watanabe M."/>
            <person name="Hiraoka S."/>
            <person name="Chiba Y."/>
            <person name="Ishida S."/>
            <person name="Ono Y."/>
            <person name="Takiguchi S."/>
            <person name="Watanabe S."/>
            <person name="Yosida M."/>
            <person name="Hotuta T."/>
            <person name="Kusano J."/>
            <person name="Kanehori K."/>
            <person name="Takahashi-Fujii A."/>
            <person name="Hara H."/>
            <person name="Tanase T.-O."/>
            <person name="Nomura Y."/>
            <person name="Togiya S."/>
            <person name="Komai F."/>
            <person name="Hara R."/>
            <person name="Takeuchi K."/>
            <person name="Arita M."/>
            <person name="Imose N."/>
            <person name="Musashino K."/>
            <person name="Yuuki H."/>
            <person name="Oshima A."/>
            <person name="Sasaki N."/>
            <person name="Aotsuka S."/>
            <person name="Yoshikawa Y."/>
            <person name="Matsunawa H."/>
            <person name="Ichihara T."/>
            <person name="Shiohata N."/>
            <person name="Sano S."/>
            <person name="Moriya S."/>
            <person name="Momiyama H."/>
            <person name="Satoh N."/>
            <person name="Takami S."/>
            <person name="Terashima Y."/>
            <person name="Suzuki O."/>
            <person name="Nakagawa S."/>
            <person name="Senoh A."/>
            <person name="Mizoguchi H."/>
            <person name="Goto Y."/>
            <person name="Shimizu F."/>
            <person name="Wakebe H."/>
            <person name="Hishigaki H."/>
            <person name="Watanabe T."/>
            <person name="Sugiyama A."/>
            <person name="Takemoto M."/>
            <person name="Kawakami B."/>
            <person name="Yamazaki M."/>
            <person name="Watanabe K."/>
            <person name="Kumagai A."/>
            <person name="Itakura S."/>
            <person name="Fukuzumi Y."/>
            <person name="Fujimori Y."/>
            <person name="Komiyama M."/>
            <person name="Tashiro H."/>
            <person name="Tanigami A."/>
            <person name="Fujiwara T."/>
            <person name="Ono T."/>
            <person name="Yamada K."/>
            <person name="Fujii Y."/>
            <person name="Ozaki K."/>
            <person name="Hirao M."/>
            <person name="Ohmori Y."/>
            <person name="Kawabata A."/>
            <person name="Hikiji T."/>
            <person name="Kobatake N."/>
            <person name="Inagaki H."/>
            <person name="Ikema Y."/>
            <person name="Okamoto S."/>
            <person name="Okitani R."/>
            <person name="Kawakami T."/>
            <person name="Noguchi S."/>
            <person name="Itoh T."/>
            <person name="Shigeta K."/>
            <person name="Senba T."/>
            <person name="Matsumura K."/>
            <person name="Nakajima Y."/>
            <person name="Mizuno T."/>
            <person name="Morinaga M."/>
            <person name="Sasaki M."/>
            <person name="Togashi T."/>
            <person name="Oyama M."/>
            <person name="Hata H."/>
            <person name="Watanabe M."/>
            <person name="Komatsu T."/>
            <person name="Mizushima-Sugano J."/>
            <person name="Satoh T."/>
            <person name="Shirai Y."/>
            <person name="Takahashi Y."/>
            <person name="Nakagawa K."/>
            <person name="Okumura K."/>
            <person name="Nagase T."/>
            <person name="Nomura N."/>
            <person name="Kikuchi H."/>
            <person name="Masuho Y."/>
            <person name="Yamashita R."/>
            <person name="Nakai K."/>
            <person name="Yada T."/>
            <person name="Nakamura Y."/>
            <person name="Ohara O."/>
            <person name="Isogai T."/>
            <person name="Sugano S."/>
        </authorList>
    </citation>
    <scope>NUCLEOTIDE SEQUENCE [LARGE SCALE MRNA]</scope>
    <source>
        <tissue>Testis</tissue>
    </source>
</reference>
<reference key="4">
    <citation type="submission" date="2005-07" db="EMBL/GenBank/DDBJ databases">
        <authorList>
            <person name="Mural R.J."/>
            <person name="Istrail S."/>
            <person name="Sutton G.G."/>
            <person name="Florea L."/>
            <person name="Halpern A.L."/>
            <person name="Mobarry C.M."/>
            <person name="Lippert R."/>
            <person name="Walenz B."/>
            <person name="Shatkay H."/>
            <person name="Dew I."/>
            <person name="Miller J.R."/>
            <person name="Flanigan M.J."/>
            <person name="Edwards N.J."/>
            <person name="Bolanos R."/>
            <person name="Fasulo D."/>
            <person name="Halldorsson B.V."/>
            <person name="Hannenhalli S."/>
            <person name="Turner R."/>
            <person name="Yooseph S."/>
            <person name="Lu F."/>
            <person name="Nusskern D.R."/>
            <person name="Shue B.C."/>
            <person name="Zheng X.H."/>
            <person name="Zhong F."/>
            <person name="Delcher A.L."/>
            <person name="Huson D.H."/>
            <person name="Kravitz S.A."/>
            <person name="Mouchard L."/>
            <person name="Reinert K."/>
            <person name="Remington K.A."/>
            <person name="Clark A.G."/>
            <person name="Waterman M.S."/>
            <person name="Eichler E.E."/>
            <person name="Adams M.D."/>
            <person name="Hunkapiller M.W."/>
            <person name="Myers E.W."/>
            <person name="Venter J.C."/>
        </authorList>
    </citation>
    <scope>NUCLEOTIDE SEQUENCE [LARGE SCALE GENOMIC DNA]</scope>
</reference>
<reference key="5">
    <citation type="journal article" date="2004" name="Genome Res.">
        <title>The status, quality, and expansion of the NIH full-length cDNA project: the Mammalian Gene Collection (MGC).</title>
        <authorList>
            <consortium name="The MGC Project Team"/>
        </authorList>
    </citation>
    <scope>NUCLEOTIDE SEQUENCE [LARGE SCALE MRNA]</scope>
    <source>
        <tissue>Eye</tissue>
    </source>
</reference>
<reference key="6">
    <citation type="journal article" date="2007" name="BMC Genomics">
        <title>The full-ORF clone resource of the German cDNA consortium.</title>
        <authorList>
            <person name="Bechtel S."/>
            <person name="Rosenfelder H."/>
            <person name="Duda A."/>
            <person name="Schmidt C.P."/>
            <person name="Ernst U."/>
            <person name="Wellenreuther R."/>
            <person name="Mehrle A."/>
            <person name="Schuster C."/>
            <person name="Bahr A."/>
            <person name="Bloecker H."/>
            <person name="Heubner D."/>
            <person name="Hoerlein A."/>
            <person name="Michel G."/>
            <person name="Wedler H."/>
            <person name="Koehrer K."/>
            <person name="Ottenwaelder B."/>
            <person name="Poustka A."/>
            <person name="Wiemann S."/>
            <person name="Schupp I."/>
        </authorList>
    </citation>
    <scope>NUCLEOTIDE SEQUENCE [LARGE SCALE MRNA] OF 486-871</scope>
    <source>
        <tissue>Testis</tissue>
    </source>
</reference>
<reference key="7">
    <citation type="journal article" date="2003" name="Genes Dev.">
        <title>Unique Sm core structure of U7 snRNPs: assembly by a specialized SMN complex and the role of a new component, Lsm11, in histone RNA processing.</title>
        <authorList>
            <person name="Pillai R.S."/>
            <person name="Grimmler M."/>
            <person name="Meister G."/>
            <person name="Will C.L."/>
            <person name="Luehrmann R."/>
            <person name="Fischer U."/>
            <person name="Schuemperli D."/>
        </authorList>
    </citation>
    <scope>INTERACTION WITH LSM11</scope>
    <source>
        <tissue>Cervix carcinoma</tissue>
    </source>
</reference>
<reference key="8">
    <citation type="journal article" date="2005" name="Nucleic Acids Res.">
        <title>U7 snRNP-specific Lsm11 protein: dual binding contacts with the 100 kDa zinc finger processing factor (ZFP100) and a ZFP100-independent function in histone RNA 3'-end processing.</title>
        <authorList>
            <person name="Azzouz T.N."/>
            <person name="Gruber A."/>
            <person name="Schuemperli D."/>
        </authorList>
    </citation>
    <scope>INTERACTION WITH LSM11</scope>
</reference>
<reference key="9">
    <citation type="journal article" date="2006" name="Mol. Cell. Biol.">
        <title>ZFP100, a component of the active U7 snRNP limiting for histone pre-mRNA processing, is required for entry into S phase.</title>
        <authorList>
            <person name="Wagner E.J."/>
            <person name="Marzluff W.F."/>
        </authorList>
    </citation>
    <scope>FUNCTION</scope>
</reference>
<reference key="10">
    <citation type="journal article" date="2006" name="RNA">
        <title>Conserved zinc fingers mediate multiple functions of ZFP100, a U7snRNP associated protein.</title>
        <authorList>
            <person name="Wagner E.J."/>
            <person name="Ospina J.K."/>
            <person name="Hu Y."/>
            <person name="Dundr M."/>
            <person name="Matera A.G."/>
            <person name="Marzluff W.F."/>
        </authorList>
    </citation>
    <scope>FUNCTION</scope>
    <scope>INTERACTION WITH LSM11</scope>
    <scope>SUBCELLULAR LOCATION</scope>
</reference>
<reference key="11">
    <citation type="journal article" date="2017" name="Nat. Struct. Mol. Biol.">
        <title>Site-specific mapping of the human SUMO proteome reveals co-modification with phosphorylation.</title>
        <authorList>
            <person name="Hendriks I.A."/>
            <person name="Lyon D."/>
            <person name="Young C."/>
            <person name="Jensen L.J."/>
            <person name="Vertegaal A.C."/>
            <person name="Nielsen M.L."/>
        </authorList>
    </citation>
    <scope>SUMOYLATION [LARGE SCALE ANALYSIS] AT LYS-148; LYS-419; LYS-549; LYS-558 AND LYS-635</scope>
    <scope>IDENTIFICATION BY MASS SPECTROMETRY [LARGE SCALE ANALYSIS]</scope>
</reference>
<reference key="12">
    <citation type="submission" date="2007-10" db="PDB data bank">
        <title>Solution structure of the C2H2 type zinc finger region of human zinc finger protein 473.</title>
        <authorList>
            <consortium name="RIKEN structural genomics initiative (RSGI)"/>
        </authorList>
    </citation>
    <scope>STRUCTURE BY NMR OF 205-841</scope>
</reference>
<protein>
    <recommendedName>
        <fullName>Zinc finger protein 473</fullName>
    </recommendedName>
    <alternativeName>
        <fullName>Zinc finger protein 100 homolog</fullName>
        <shortName>Zfp-100</shortName>
    </alternativeName>
</protein>
<comment type="function">
    <text evidence="4 7 8">Involved in histone 3'-end pre-mRNA processing by associating with U7 snRNP and interacting with SLBP/pre-mRNA complex. Increases histone 3'-end pre-mRNA processing but has no effect on U7 snRNP levels, when overexpressed. Required for cell cycle progression from G1 to S phases.</text>
</comment>
<comment type="subunit">
    <text evidence="4 5 6 7">Interacts with the SLBP/pre-mRNA complex but not with SLBP alone. Interacts with LSM11 in a U7 snRNP-dependent manner.</text>
</comment>
<comment type="interaction">
    <interactant intactId="EBI-751409">
        <id>Q8WTR7</id>
    </interactant>
    <interactant intactId="EBI-8637627">
        <id>Q8WTP8</id>
        <label>AEN</label>
    </interactant>
    <organismsDiffer>false</organismsDiffer>
    <experiments>5</experiments>
</comment>
<comment type="interaction">
    <interactant intactId="EBI-751409">
        <id>Q8WTR7</id>
    </interactant>
    <interactant intactId="EBI-750020">
        <id>P49760</id>
        <label>CLK2</label>
    </interactant>
    <organismsDiffer>false</organismsDiffer>
    <experiments>3</experiments>
</comment>
<comment type="interaction">
    <interactant intactId="EBI-751409">
        <id>Q8WTR7</id>
    </interactant>
    <interactant intactId="EBI-745579">
        <id>P49761</id>
        <label>CLK3</label>
    </interactant>
    <organismsDiffer>false</organismsDiffer>
    <experiments>3</experiments>
</comment>
<comment type="interaction">
    <interactant intactId="EBI-751409">
        <id>Q8WTR7</id>
    </interactant>
    <interactant intactId="EBI-1051531">
        <id>Q6P158</id>
        <label>DHX57</label>
    </interactant>
    <organismsDiffer>false</organismsDiffer>
    <experiments>3</experiments>
</comment>
<comment type="interaction">
    <interactant intactId="EBI-751409">
        <id>Q8WTR7</id>
    </interactant>
    <interactant intactId="EBI-5666657">
        <id>Q9NWQ4</id>
        <label>GPATCH2L</label>
    </interactant>
    <organismsDiffer>false</organismsDiffer>
    <experiments>4</experiments>
</comment>
<comment type="interaction">
    <interactant intactId="EBI-751409">
        <id>Q8WTR7</id>
    </interactant>
    <interactant intactId="EBI-11955579">
        <id>P60014</id>
        <label>KRTAP10-10</label>
    </interactant>
    <organismsDiffer>false</organismsDiffer>
    <experiments>3</experiments>
</comment>
<comment type="interaction">
    <interactant intactId="EBI-751409">
        <id>Q8WTR7</id>
    </interactant>
    <interactant intactId="EBI-10171774">
        <id>P60410</id>
        <label>KRTAP10-8</label>
    </interactant>
    <organismsDiffer>false</organismsDiffer>
    <experiments>6</experiments>
</comment>
<comment type="interaction">
    <interactant intactId="EBI-751409">
        <id>Q8WTR7</id>
    </interactant>
    <interactant intactId="EBI-10172052">
        <id>P60411</id>
        <label>KRTAP10-9</label>
    </interactant>
    <organismsDiffer>false</organismsDiffer>
    <experiments>3</experiments>
</comment>
<comment type="interaction">
    <interactant intactId="EBI-751409">
        <id>Q8WTR7</id>
    </interactant>
    <interactant intactId="EBI-1567797">
        <id>Q8WWY3</id>
        <label>PRPF31</label>
    </interactant>
    <organismsDiffer>false</organismsDiffer>
    <experiments>3</experiments>
</comment>
<comment type="interaction">
    <interactant intactId="EBI-751409">
        <id>Q8WTR7</id>
    </interactant>
    <interactant intactId="EBI-721525">
        <id>P98175</id>
        <label>RBM10</label>
    </interactant>
    <organismsDiffer>false</organismsDiffer>
    <experiments>3</experiments>
</comment>
<comment type="interaction">
    <interactant intactId="EBI-751409">
        <id>Q8WTR7</id>
    </interactant>
    <interactant intactId="EBI-10176640">
        <id>D3DU92</id>
        <label>rnps1</label>
    </interactant>
    <organismsDiffer>false</organismsDiffer>
    <experiments>3</experiments>
</comment>
<comment type="interaction">
    <interactant intactId="EBI-751409">
        <id>Q8WTR7</id>
    </interactant>
    <interactant intactId="EBI-725997">
        <id>Q8WV44</id>
        <label>TRIM41</label>
    </interactant>
    <organismsDiffer>false</organismsDiffer>
    <experiments>5</experiments>
</comment>
<comment type="interaction">
    <interactant intactId="EBI-751409">
        <id>Q8WTR7</id>
    </interactant>
    <interactant intactId="EBI-10177272">
        <id>P15622-3</id>
        <label>ZNF250</label>
    </interactant>
    <organismsDiffer>false</organismsDiffer>
    <experiments>3</experiments>
</comment>
<comment type="interaction">
    <interactant intactId="EBI-751409">
        <id>Q8WTR7</id>
    </interactant>
    <interactant intactId="EBI-347633">
        <id>Q9H9D4</id>
        <label>ZNF408</label>
    </interactant>
    <organismsDiffer>false</organismsDiffer>
    <experiments>3</experiments>
</comment>
<comment type="interaction">
    <interactant intactId="EBI-751409">
        <id>Q8WTR7</id>
    </interactant>
    <interactant intactId="EBI-10486136">
        <id>Q6ZNH5</id>
        <label>ZNF497</label>
    </interactant>
    <organismsDiffer>false</organismsDiffer>
    <experiments>3</experiments>
</comment>
<comment type="interaction">
    <interactant intactId="EBI-751409">
        <id>Q8WTR7</id>
    </interactant>
    <interactant intactId="EBI-10240849">
        <id>Q3KQV3</id>
        <label>ZNF792</label>
    </interactant>
    <organismsDiffer>false</organismsDiffer>
    <experiments>5</experiments>
</comment>
<comment type="interaction">
    <interactant intactId="EBI-751409">
        <id>Q8WTR7</id>
    </interactant>
    <interactant intactId="EBI-11962574">
        <id>Q96EG3</id>
        <label>ZNF837</label>
    </interactant>
    <organismsDiffer>false</organismsDiffer>
    <experiments>3</experiments>
</comment>
<comment type="interaction">
    <interactant intactId="EBI-751409">
        <id>Q8WTR7</id>
    </interactant>
    <interactant intactId="EBI-1210440">
        <id>O43309</id>
        <label>ZSCAN12</label>
    </interactant>
    <organismsDiffer>false</organismsDiffer>
    <experiments>3</experiments>
</comment>
<comment type="subcellular location">
    <subcellularLocation>
        <location evidence="7">Nucleus</location>
    </subcellularLocation>
    <text>Stable component of Cajal bodies (CBs). Colocalizes with SMN, coilin and U7 snRNA.</text>
</comment>
<comment type="domain">
    <text>The C2H2-type zinc finger 2 to 6 are necessary and sufficient for discrete Cajal bodies localization. The C2H2-type zinc finger 5 to 10 are necessary and sufficient for interaction with LSM11. The C2H2-type zinc finger 2 to 8 are necessary for interaction with the SLBP/RNA complex in the histone pre-mRNAs. The C2H2-type zinc finger 2 to 10 confer activity in histone pre-mRNA processing.</text>
</comment>
<comment type="similarity">
    <text evidence="9">Belongs to the krueppel C2H2-type zinc-finger protein family.</text>
</comment>
<comment type="sequence caution" evidence="9">
    <conflict type="erroneous initiation">
        <sequence resource="EMBL-CDS" id="BAA86455"/>
    </conflict>
</comment>
<dbReference type="EMBL" id="AF454744">
    <property type="protein sequence ID" value="AAL51029.1"/>
    <property type="molecule type" value="mRNA"/>
</dbReference>
<dbReference type="EMBL" id="AB032967">
    <property type="protein sequence ID" value="BAA86455.1"/>
    <property type="status" value="ALT_INIT"/>
    <property type="molecule type" value="mRNA"/>
</dbReference>
<dbReference type="EMBL" id="AK292452">
    <property type="protein sequence ID" value="BAF85141.1"/>
    <property type="molecule type" value="mRNA"/>
</dbReference>
<dbReference type="EMBL" id="CH471177">
    <property type="protein sequence ID" value="EAW52593.1"/>
    <property type="molecule type" value="Genomic_DNA"/>
</dbReference>
<dbReference type="EMBL" id="BC018612">
    <property type="protein sequence ID" value="AAH18612.1"/>
    <property type="molecule type" value="mRNA"/>
</dbReference>
<dbReference type="EMBL" id="AL080143">
    <property type="protein sequence ID" value="CAB45736.1"/>
    <property type="molecule type" value="mRNA"/>
</dbReference>
<dbReference type="CCDS" id="CCDS33077.1"/>
<dbReference type="PIR" id="T12527">
    <property type="entry name" value="T12527"/>
</dbReference>
<dbReference type="RefSeq" id="NP_001006657.1">
    <property type="nucleotide sequence ID" value="NM_001006656.4"/>
</dbReference>
<dbReference type="RefSeq" id="NP_001295353.1">
    <property type="nucleotide sequence ID" value="NM_001308424.2"/>
</dbReference>
<dbReference type="RefSeq" id="NP_056243.1">
    <property type="nucleotide sequence ID" value="NM_015428.4"/>
</dbReference>
<dbReference type="PDB" id="2EMB">
    <property type="method" value="NMR"/>
    <property type="chains" value="A=342-372"/>
</dbReference>
<dbReference type="PDB" id="2EMC">
    <property type="method" value="NMR"/>
    <property type="chains" value="A=641-673"/>
</dbReference>
<dbReference type="PDB" id="2EME">
    <property type="method" value="NMR"/>
    <property type="chains" value="A=725-757"/>
</dbReference>
<dbReference type="PDB" id="2EOU">
    <property type="method" value="NMR"/>
    <property type="chains" value="A=370-400"/>
</dbReference>
<dbReference type="PDB" id="2EOX">
    <property type="method" value="NMR"/>
    <property type="chains" value="A=315-345"/>
</dbReference>
<dbReference type="PDB" id="2EOY">
    <property type="method" value="NMR"/>
    <property type="chains" value="A=557-589"/>
</dbReference>
<dbReference type="PDB" id="2EOZ">
    <property type="method" value="NMR"/>
    <property type="chains" value="A=809-841"/>
</dbReference>
<dbReference type="PDB" id="2YRH">
    <property type="method" value="NMR"/>
    <property type="chains" value="A=699-729"/>
</dbReference>
<dbReference type="PDB" id="2YRJ">
    <property type="method" value="NMR"/>
    <property type="chains" value="A=781-813"/>
</dbReference>
<dbReference type="PDB" id="2YSV">
    <property type="method" value="NMR"/>
    <property type="chains" value="A=755-783"/>
</dbReference>
<dbReference type="PDB" id="2YTD">
    <property type="method" value="NMR"/>
    <property type="chains" value="A=426-458"/>
</dbReference>
<dbReference type="PDB" id="2YTE">
    <property type="method" value="NMR"/>
    <property type="chains" value="A=484-512"/>
</dbReference>
<dbReference type="PDB" id="2YTT">
    <property type="method" value="NMR"/>
    <property type="chains" value="A=204-236"/>
</dbReference>
<dbReference type="PDB" id="2YU5">
    <property type="method" value="NMR"/>
    <property type="chains" value="A=669-699"/>
</dbReference>
<dbReference type="PDB" id="9AZI">
    <property type="method" value="NMR"/>
    <property type="chains" value="A=814-840"/>
</dbReference>
<dbReference type="PDBsum" id="2EMB"/>
<dbReference type="PDBsum" id="2EMC"/>
<dbReference type="PDBsum" id="2EME"/>
<dbReference type="PDBsum" id="2EOU"/>
<dbReference type="PDBsum" id="2EOX"/>
<dbReference type="PDBsum" id="2EOY"/>
<dbReference type="PDBsum" id="2EOZ"/>
<dbReference type="PDBsum" id="2YRH"/>
<dbReference type="PDBsum" id="2YRJ"/>
<dbReference type="PDBsum" id="2YSV"/>
<dbReference type="PDBsum" id="2YTD"/>
<dbReference type="PDBsum" id="2YTE"/>
<dbReference type="PDBsum" id="2YTT"/>
<dbReference type="PDBsum" id="2YU5"/>
<dbReference type="PDBsum" id="9AZI"/>
<dbReference type="SMR" id="Q8WTR7"/>
<dbReference type="BioGRID" id="117398">
    <property type="interactions" value="28"/>
</dbReference>
<dbReference type="FunCoup" id="Q8WTR7">
    <property type="interactions" value="218"/>
</dbReference>
<dbReference type="IntAct" id="Q8WTR7">
    <property type="interactions" value="24"/>
</dbReference>
<dbReference type="STRING" id="9606.ENSP00000472808"/>
<dbReference type="iPTMnet" id="Q8WTR7"/>
<dbReference type="PhosphoSitePlus" id="Q8WTR7"/>
<dbReference type="SwissPalm" id="Q8WTR7"/>
<dbReference type="BioMuta" id="ZNF473"/>
<dbReference type="DMDM" id="51702187"/>
<dbReference type="jPOST" id="Q8WTR7"/>
<dbReference type="MassIVE" id="Q8WTR7"/>
<dbReference type="PaxDb" id="9606-ENSP00000472808"/>
<dbReference type="PeptideAtlas" id="Q8WTR7"/>
<dbReference type="ProteomicsDB" id="74591"/>
<dbReference type="Antibodypedia" id="32254">
    <property type="antibodies" value="120 antibodies from 21 providers"/>
</dbReference>
<dbReference type="DNASU" id="25888"/>
<dbReference type="Ensembl" id="ENST00000270617.8">
    <property type="protein sequence ID" value="ENSP00000270617.3"/>
    <property type="gene ID" value="ENSG00000142528.16"/>
</dbReference>
<dbReference type="Ensembl" id="ENST00000391821.6">
    <property type="protein sequence ID" value="ENSP00000375697.1"/>
    <property type="gene ID" value="ENSG00000142528.16"/>
</dbReference>
<dbReference type="Ensembl" id="ENST00000595661.5">
    <property type="protein sequence ID" value="ENSP00000472808.1"/>
    <property type="gene ID" value="ENSG00000142528.16"/>
</dbReference>
<dbReference type="GeneID" id="25888"/>
<dbReference type="KEGG" id="hsa:25888"/>
<dbReference type="MANE-Select" id="ENST00000270617.8">
    <property type="protein sequence ID" value="ENSP00000270617.3"/>
    <property type="RefSeq nucleotide sequence ID" value="NM_015428.4"/>
    <property type="RefSeq protein sequence ID" value="NP_056243.1"/>
</dbReference>
<dbReference type="UCSC" id="uc002prm.4">
    <property type="organism name" value="human"/>
</dbReference>
<dbReference type="AGR" id="HGNC:23239"/>
<dbReference type="CTD" id="25888"/>
<dbReference type="DisGeNET" id="25888"/>
<dbReference type="GeneCards" id="ZNF473"/>
<dbReference type="HGNC" id="HGNC:23239">
    <property type="gene designation" value="ZNF473"/>
</dbReference>
<dbReference type="HPA" id="ENSG00000142528">
    <property type="expression patterns" value="Tissue enriched (testis)"/>
</dbReference>
<dbReference type="MalaCards" id="ZNF473"/>
<dbReference type="MIM" id="617908">
    <property type="type" value="gene"/>
</dbReference>
<dbReference type="neXtProt" id="NX_Q8WTR7"/>
<dbReference type="OpenTargets" id="ENSG00000142528"/>
<dbReference type="PharmGKB" id="PA134987987"/>
<dbReference type="VEuPathDB" id="HostDB:ENSG00000142528"/>
<dbReference type="eggNOG" id="KOG1721">
    <property type="taxonomic scope" value="Eukaryota"/>
</dbReference>
<dbReference type="GeneTree" id="ENSGT00840000130048"/>
<dbReference type="HOGENOM" id="CLU_002678_27_0_1"/>
<dbReference type="InParanoid" id="Q8WTR7"/>
<dbReference type="OMA" id="YSCAKCK"/>
<dbReference type="OrthoDB" id="9411774at2759"/>
<dbReference type="PAN-GO" id="Q8WTR7">
    <property type="GO annotations" value="4 GO annotations based on evolutionary models"/>
</dbReference>
<dbReference type="PhylomeDB" id="Q8WTR7"/>
<dbReference type="TreeFam" id="TF350932"/>
<dbReference type="PathwayCommons" id="Q8WTR7"/>
<dbReference type="Reactome" id="R-HSA-111367">
    <property type="pathway name" value="SLBP independent Processing of Histone Pre-mRNAs"/>
</dbReference>
<dbReference type="Reactome" id="R-HSA-212436">
    <property type="pathway name" value="Generic Transcription Pathway"/>
</dbReference>
<dbReference type="Reactome" id="R-HSA-73856">
    <property type="pathway name" value="RNA Polymerase II Transcription Termination"/>
</dbReference>
<dbReference type="Reactome" id="R-HSA-77588">
    <property type="pathway name" value="SLBP Dependent Processing of Replication-Dependent Histone Pre-mRNAs"/>
</dbReference>
<dbReference type="SignaLink" id="Q8WTR7"/>
<dbReference type="BioGRID-ORCS" id="25888">
    <property type="hits" value="8 hits in 1178 CRISPR screens"/>
</dbReference>
<dbReference type="EvolutionaryTrace" id="Q8WTR7"/>
<dbReference type="GeneWiki" id="ZNF473"/>
<dbReference type="GenomeRNAi" id="25888"/>
<dbReference type="Pharos" id="Q8WTR7">
    <property type="development level" value="Tbio"/>
</dbReference>
<dbReference type="PRO" id="PR:Q8WTR7"/>
<dbReference type="Proteomes" id="UP000005640">
    <property type="component" value="Chromosome 19"/>
</dbReference>
<dbReference type="RNAct" id="Q8WTR7">
    <property type="molecule type" value="protein"/>
</dbReference>
<dbReference type="Bgee" id="ENSG00000142528">
    <property type="expression patterns" value="Expressed in right uterine tube and 142 other cell types or tissues"/>
</dbReference>
<dbReference type="ExpressionAtlas" id="Q8WTR7">
    <property type="expression patterns" value="baseline and differential"/>
</dbReference>
<dbReference type="GO" id="GO:0015030">
    <property type="term" value="C:Cajal body"/>
    <property type="evidence" value="ECO:0000314"/>
    <property type="project" value="UniProtKB"/>
</dbReference>
<dbReference type="GO" id="GO:0005654">
    <property type="term" value="C:nucleoplasm"/>
    <property type="evidence" value="ECO:0000314"/>
    <property type="project" value="HPA"/>
</dbReference>
<dbReference type="GO" id="GO:0005634">
    <property type="term" value="C:nucleus"/>
    <property type="evidence" value="ECO:0000318"/>
    <property type="project" value="GO_Central"/>
</dbReference>
<dbReference type="GO" id="GO:0003677">
    <property type="term" value="F:DNA binding"/>
    <property type="evidence" value="ECO:0007669"/>
    <property type="project" value="UniProtKB-KW"/>
</dbReference>
<dbReference type="GO" id="GO:0008270">
    <property type="term" value="F:zinc ion binding"/>
    <property type="evidence" value="ECO:0007669"/>
    <property type="project" value="UniProtKB-KW"/>
</dbReference>
<dbReference type="GO" id="GO:0006398">
    <property type="term" value="P:mRNA 3'-end processing by stem-loop binding and cleavage"/>
    <property type="evidence" value="ECO:0000314"/>
    <property type="project" value="UniProtKB"/>
</dbReference>
<dbReference type="GO" id="GO:0006357">
    <property type="term" value="P:regulation of transcription by RNA polymerase II"/>
    <property type="evidence" value="ECO:0000318"/>
    <property type="project" value="GO_Central"/>
</dbReference>
<dbReference type="CDD" id="cd07765">
    <property type="entry name" value="KRAB_A-box"/>
    <property type="match status" value="1"/>
</dbReference>
<dbReference type="FunFam" id="3.30.160.60:FF:000029">
    <property type="entry name" value="GLI family zinc finger 4"/>
    <property type="match status" value="1"/>
</dbReference>
<dbReference type="FunFam" id="3.30.160.60:FF:000875">
    <property type="entry name" value="zinc finger protein 236 isoform X7"/>
    <property type="match status" value="1"/>
</dbReference>
<dbReference type="FunFam" id="3.30.160.60:FF:000348">
    <property type="entry name" value="zinc finger protein 260"/>
    <property type="match status" value="1"/>
</dbReference>
<dbReference type="FunFam" id="3.30.160.60:FF:001820">
    <property type="entry name" value="Zinc finger protein 473"/>
    <property type="match status" value="1"/>
</dbReference>
<dbReference type="FunFam" id="3.30.160.60:FF:001871">
    <property type="entry name" value="Zinc finger protein 473"/>
    <property type="match status" value="1"/>
</dbReference>
<dbReference type="FunFam" id="3.30.160.60:FF:001882">
    <property type="entry name" value="Zinc finger protein 473"/>
    <property type="match status" value="1"/>
</dbReference>
<dbReference type="FunFam" id="3.30.160.60:FF:002004">
    <property type="entry name" value="Zinc finger protein 473"/>
    <property type="match status" value="1"/>
</dbReference>
<dbReference type="FunFam" id="3.30.160.60:FF:002090">
    <property type="entry name" value="Zinc finger protein 473"/>
    <property type="match status" value="1"/>
</dbReference>
<dbReference type="FunFam" id="3.30.160.60:FF:002242">
    <property type="entry name" value="Zinc finger protein 473"/>
    <property type="match status" value="1"/>
</dbReference>
<dbReference type="FunFam" id="3.30.160.60:FF:002245">
    <property type="entry name" value="Zinc finger protein 473"/>
    <property type="match status" value="1"/>
</dbReference>
<dbReference type="FunFam" id="3.30.160.60:FF:002532">
    <property type="entry name" value="Zinc finger protein 473"/>
    <property type="match status" value="1"/>
</dbReference>
<dbReference type="FunFam" id="3.30.160.60:FF:002994">
    <property type="entry name" value="Zinc finger protein 473"/>
    <property type="match status" value="1"/>
</dbReference>
<dbReference type="FunFam" id="3.30.160.60:FF:003057">
    <property type="entry name" value="Zinc finger protein 473"/>
    <property type="match status" value="1"/>
</dbReference>
<dbReference type="FunFam" id="3.30.160.60:FF:000340">
    <property type="entry name" value="zinc finger protein 473 isoform X1"/>
    <property type="match status" value="2"/>
</dbReference>
<dbReference type="FunFam" id="3.30.160.60:FF:002576">
    <property type="entry name" value="zinc finger protein 473 isoform X2"/>
    <property type="match status" value="1"/>
</dbReference>
<dbReference type="FunFam" id="3.30.160.60:FF:002254">
    <property type="entry name" value="Zinc finger protein 540"/>
    <property type="match status" value="1"/>
</dbReference>
<dbReference type="FunFam" id="3.30.160.60:FF:000330">
    <property type="entry name" value="Zinc finger with KRAB and SCAN domains 1"/>
    <property type="match status" value="1"/>
</dbReference>
<dbReference type="Gene3D" id="3.30.160.60">
    <property type="entry name" value="Classic Zinc Finger"/>
    <property type="match status" value="20"/>
</dbReference>
<dbReference type="InterPro" id="IPR001909">
    <property type="entry name" value="KRAB"/>
</dbReference>
<dbReference type="InterPro" id="IPR036051">
    <property type="entry name" value="KRAB_dom_sf"/>
</dbReference>
<dbReference type="InterPro" id="IPR036236">
    <property type="entry name" value="Znf_C2H2_sf"/>
</dbReference>
<dbReference type="InterPro" id="IPR013087">
    <property type="entry name" value="Znf_C2H2_type"/>
</dbReference>
<dbReference type="PANTHER" id="PTHR24393">
    <property type="entry name" value="ZINC FINGER PROTEIN"/>
    <property type="match status" value="1"/>
</dbReference>
<dbReference type="PANTHER" id="PTHR24393:SF100">
    <property type="entry name" value="ZINC FINGER PROTEIN-RELATED"/>
    <property type="match status" value="1"/>
</dbReference>
<dbReference type="Pfam" id="PF01352">
    <property type="entry name" value="KRAB"/>
    <property type="match status" value="1"/>
</dbReference>
<dbReference type="Pfam" id="PF00096">
    <property type="entry name" value="zf-C2H2"/>
    <property type="match status" value="15"/>
</dbReference>
<dbReference type="SMART" id="SM00349">
    <property type="entry name" value="KRAB"/>
    <property type="match status" value="1"/>
</dbReference>
<dbReference type="SMART" id="SM00355">
    <property type="entry name" value="ZnF_C2H2"/>
    <property type="match status" value="20"/>
</dbReference>
<dbReference type="SUPFAM" id="SSF57667">
    <property type="entry name" value="beta-beta-alpha zinc fingers"/>
    <property type="match status" value="11"/>
</dbReference>
<dbReference type="SUPFAM" id="SSF109640">
    <property type="entry name" value="KRAB domain (Kruppel-associated box)"/>
    <property type="match status" value="1"/>
</dbReference>
<dbReference type="PROSITE" id="PS50805">
    <property type="entry name" value="KRAB"/>
    <property type="match status" value="1"/>
</dbReference>
<dbReference type="PROSITE" id="PS00028">
    <property type="entry name" value="ZINC_FINGER_C2H2_1"/>
    <property type="match status" value="18"/>
</dbReference>
<dbReference type="PROSITE" id="PS50157">
    <property type="entry name" value="ZINC_FINGER_C2H2_2"/>
    <property type="match status" value="20"/>
</dbReference>
<organism>
    <name type="scientific">Homo sapiens</name>
    <name type="common">Human</name>
    <dbReference type="NCBI Taxonomy" id="9606"/>
    <lineage>
        <taxon>Eukaryota</taxon>
        <taxon>Metazoa</taxon>
        <taxon>Chordata</taxon>
        <taxon>Craniata</taxon>
        <taxon>Vertebrata</taxon>
        <taxon>Euteleostomi</taxon>
        <taxon>Mammalia</taxon>
        <taxon>Eutheria</taxon>
        <taxon>Euarchontoglires</taxon>
        <taxon>Primates</taxon>
        <taxon>Haplorrhini</taxon>
        <taxon>Catarrhini</taxon>
        <taxon>Hominidae</taxon>
        <taxon>Homo</taxon>
    </lineage>
</organism>
<sequence>MAEEFVTLKDVGMDFTLGDWEQLGLEQGDTFWDTALDNCQDLFLLDPPRPNLTSHPDGSEDLEPLAGGSPEATSPDVTETKNSPLMEDFFEEGFSQEIIEMLSKDGFWNSNFGEACIEDTWLDSLLGDPESLLRSDIATNGESPTECKSHELKRGLSPVSTVSTGEDSMVHNVSEKTLTPAKSKEYRGEFFSYSDHSQQDSVQEGEKPYQCSECGKSFSGSYRLTQHWITHTREKPTVHQECEQGFDRNASLSVYPKTHTGYKFYVCNEYGTTFSQSTYLWHQKTHTGEKPCKSQDSDHPPSHDTQPGEHQKTHTDSKSYNCNECGKAFTRIFHLTRHQKIHTRKRYECSKCQATFNLRKHLIQHQKTHAAKTTSECQECGKIFRHSSLLIEHQALHAGEEPYKCNERGKSFRHNSTLKIHQRVHSGEKPYKCSECGKAFHRHTHLNEHRRIHTGYRPHKCQECVRSFSRPSHLMRHQAIHTAEKPYSCAECKETFSDNNRLVQHQKMHTVKTPYECQECGERFICGSTLKCHESVHAREKQGFFVSGKILDQNPEQKEKCFKCNKCEKTFSCSKYLTQHERIHTRGVKPFECDQCGKAFGQSTRLIHHQRIHSRVRLYKWGEQGKAISSASLIKLQSFHTKEHPFKCNECGKTFSHSAHLSKHQLIHAGENPFKCSKCDRVFTQRNYLVQHERTHARKKPLVCNECGKTFRQSSCLSKHQRIHSGEKPYVCDYCGKAFGLSAELVRHQRIHTGEKPYVCQECGKAFTQSSCLSIHRRVHTGEKPYRCGECGKAFAQKANLTQHQRIHTGEKPYSCNVCGKAFVLSAHLNQHLRVHTQETLYQCQRCQKAFRCHSSLSRHQRVHNKQQYCL</sequence>